<feature type="chain" id="PRO_0000191056" description="Solute carrier organic anion transporter family member 1C1">
    <location>
        <begin position="1"/>
        <end position="715"/>
    </location>
</feature>
<feature type="topological domain" description="Cytoplasmic" evidence="3">
    <location>
        <begin position="1"/>
        <end position="43"/>
    </location>
</feature>
<feature type="transmembrane region" description="Helical; Name=1" evidence="3">
    <location>
        <begin position="44"/>
        <end position="63"/>
    </location>
</feature>
<feature type="topological domain" description="Extracellular" evidence="3">
    <location>
        <begin position="64"/>
        <end position="82"/>
    </location>
</feature>
<feature type="transmembrane region" description="Helical; Name=2" evidence="3">
    <location>
        <begin position="83"/>
        <end position="103"/>
    </location>
</feature>
<feature type="topological domain" description="Cytoplasmic" evidence="3">
    <location>
        <begin position="104"/>
        <end position="109"/>
    </location>
</feature>
<feature type="transmembrane region" description="Helical; Name=3" evidence="3">
    <location>
        <begin position="110"/>
        <end position="134"/>
    </location>
</feature>
<feature type="topological domain" description="Extracellular" evidence="3">
    <location>
        <begin position="135"/>
        <end position="187"/>
    </location>
</feature>
<feature type="transmembrane region" description="Helical; Name=4" evidence="3">
    <location>
        <begin position="188"/>
        <end position="216"/>
    </location>
</feature>
<feature type="topological domain" description="Cytoplasmic" evidence="3">
    <location>
        <begin position="217"/>
        <end position="235"/>
    </location>
</feature>
<feature type="transmembrane region" description="Helical; Name=5" evidence="3">
    <location>
        <begin position="236"/>
        <end position="256"/>
    </location>
</feature>
<feature type="topological domain" description="Extracellular" evidence="3">
    <location>
        <begin position="257"/>
        <end position="274"/>
    </location>
</feature>
<feature type="transmembrane region" description="Helical; Name=6" evidence="3">
    <location>
        <begin position="275"/>
        <end position="299"/>
    </location>
</feature>
<feature type="topological domain" description="Cytoplasmic" evidence="3">
    <location>
        <begin position="300"/>
        <end position="351"/>
    </location>
</feature>
<feature type="transmembrane region" description="Helical; Name=7" evidence="3">
    <location>
        <begin position="352"/>
        <end position="373"/>
    </location>
</feature>
<feature type="topological domain" description="Extracellular" evidence="3">
    <location>
        <begin position="374"/>
        <end position="393"/>
    </location>
</feature>
<feature type="transmembrane region" description="Helical; Name=8" evidence="3">
    <location>
        <begin position="394"/>
        <end position="417"/>
    </location>
</feature>
<feature type="topological domain" description="Cytoplasmic" evidence="3">
    <location>
        <begin position="418"/>
        <end position="421"/>
    </location>
</feature>
<feature type="transmembrane region" description="Helical; Name=9" evidence="3">
    <location>
        <begin position="422"/>
        <end position="445"/>
    </location>
</feature>
<feature type="topological domain" description="Extracellular" evidence="3">
    <location>
        <begin position="446"/>
        <end position="557"/>
    </location>
</feature>
<feature type="transmembrane region" description="Helical; Name=10" evidence="3">
    <location>
        <begin position="558"/>
        <end position="580"/>
    </location>
</feature>
<feature type="topological domain" description="Cytoplasmic" evidence="3">
    <location>
        <begin position="581"/>
        <end position="589"/>
    </location>
</feature>
<feature type="transmembrane region" description="Helical; Name=11" evidence="3">
    <location>
        <begin position="590"/>
        <end position="615"/>
    </location>
</feature>
<feature type="topological domain" description="Extracellular" evidence="3">
    <location>
        <begin position="616"/>
        <end position="649"/>
    </location>
</feature>
<feature type="transmembrane region" description="Helical; Name=12" evidence="3">
    <location>
        <begin position="650"/>
        <end position="667"/>
    </location>
</feature>
<feature type="topological domain" description="Cytoplasmic" evidence="3">
    <location>
        <begin position="668"/>
        <end position="715"/>
    </location>
</feature>
<feature type="domain" description="Kazal-like" evidence="4">
    <location>
        <begin position="473"/>
        <end position="528"/>
    </location>
</feature>
<feature type="glycosylation site" description="N-linked (GlcNAc...) asparagine" evidence="3">
    <location>
        <position position="452"/>
    </location>
</feature>
<feature type="glycosylation site" description="N-linked (GlcNAc...) asparagine" evidence="3">
    <location>
        <position position="523"/>
    </location>
</feature>
<feature type="glycosylation site" description="N-linked (GlcNAc...) asparagine" evidence="3">
    <location>
        <position position="536"/>
    </location>
</feature>
<feature type="disulfide bond" evidence="4">
    <location>
        <begin position="479"/>
        <end position="509"/>
    </location>
</feature>
<feature type="disulfide bond" evidence="4">
    <location>
        <begin position="485"/>
        <end position="505"/>
    </location>
</feature>
<feature type="disulfide bond" evidence="4">
    <location>
        <begin position="494"/>
        <end position="526"/>
    </location>
</feature>
<feature type="sequence conflict" description="In Ref. 2; BAC33495." evidence="13" ref="2">
    <location>
        <position position="603"/>
    </location>
</feature>
<name>SO1C1_MOUSE</name>
<gene>
    <name type="primary">Slco1c1</name>
    <name type="synonym">Oatp1c1</name>
    <name type="synonym">Oatpf</name>
    <name type="synonym">Slc21a14</name>
</gene>
<proteinExistence type="evidence at protein level"/>
<reference key="1">
    <citation type="submission" date="2000-08" db="EMBL/GenBank/DDBJ databases">
        <authorList>
            <person name="Hampton L.L."/>
            <person name="Lattig M.C."/>
            <person name="Battey J.F."/>
        </authorList>
    </citation>
    <scope>NUCLEOTIDE SEQUENCE [MRNA]</scope>
    <source>
        <strain>BALB/cJ</strain>
        <tissue>Cochlea</tissue>
    </source>
</reference>
<reference key="2">
    <citation type="journal article" date="2005" name="Science">
        <title>The transcriptional landscape of the mammalian genome.</title>
        <authorList>
            <person name="Carninci P."/>
            <person name="Kasukawa T."/>
            <person name="Katayama S."/>
            <person name="Gough J."/>
            <person name="Frith M.C."/>
            <person name="Maeda N."/>
            <person name="Oyama R."/>
            <person name="Ravasi T."/>
            <person name="Lenhard B."/>
            <person name="Wells C."/>
            <person name="Kodzius R."/>
            <person name="Shimokawa K."/>
            <person name="Bajic V.B."/>
            <person name="Brenner S.E."/>
            <person name="Batalov S."/>
            <person name="Forrest A.R."/>
            <person name="Zavolan M."/>
            <person name="Davis M.J."/>
            <person name="Wilming L.G."/>
            <person name="Aidinis V."/>
            <person name="Allen J.E."/>
            <person name="Ambesi-Impiombato A."/>
            <person name="Apweiler R."/>
            <person name="Aturaliya R.N."/>
            <person name="Bailey T.L."/>
            <person name="Bansal M."/>
            <person name="Baxter L."/>
            <person name="Beisel K.W."/>
            <person name="Bersano T."/>
            <person name="Bono H."/>
            <person name="Chalk A.M."/>
            <person name="Chiu K.P."/>
            <person name="Choudhary V."/>
            <person name="Christoffels A."/>
            <person name="Clutterbuck D.R."/>
            <person name="Crowe M.L."/>
            <person name="Dalla E."/>
            <person name="Dalrymple B.P."/>
            <person name="de Bono B."/>
            <person name="Della Gatta G."/>
            <person name="di Bernardo D."/>
            <person name="Down T."/>
            <person name="Engstrom P."/>
            <person name="Fagiolini M."/>
            <person name="Faulkner G."/>
            <person name="Fletcher C.F."/>
            <person name="Fukushima T."/>
            <person name="Furuno M."/>
            <person name="Futaki S."/>
            <person name="Gariboldi M."/>
            <person name="Georgii-Hemming P."/>
            <person name="Gingeras T.R."/>
            <person name="Gojobori T."/>
            <person name="Green R.E."/>
            <person name="Gustincich S."/>
            <person name="Harbers M."/>
            <person name="Hayashi Y."/>
            <person name="Hensch T.K."/>
            <person name="Hirokawa N."/>
            <person name="Hill D."/>
            <person name="Huminiecki L."/>
            <person name="Iacono M."/>
            <person name="Ikeo K."/>
            <person name="Iwama A."/>
            <person name="Ishikawa T."/>
            <person name="Jakt M."/>
            <person name="Kanapin A."/>
            <person name="Katoh M."/>
            <person name="Kawasawa Y."/>
            <person name="Kelso J."/>
            <person name="Kitamura H."/>
            <person name="Kitano H."/>
            <person name="Kollias G."/>
            <person name="Krishnan S.P."/>
            <person name="Kruger A."/>
            <person name="Kummerfeld S.K."/>
            <person name="Kurochkin I.V."/>
            <person name="Lareau L.F."/>
            <person name="Lazarevic D."/>
            <person name="Lipovich L."/>
            <person name="Liu J."/>
            <person name="Liuni S."/>
            <person name="McWilliam S."/>
            <person name="Madan Babu M."/>
            <person name="Madera M."/>
            <person name="Marchionni L."/>
            <person name="Matsuda H."/>
            <person name="Matsuzawa S."/>
            <person name="Miki H."/>
            <person name="Mignone F."/>
            <person name="Miyake S."/>
            <person name="Morris K."/>
            <person name="Mottagui-Tabar S."/>
            <person name="Mulder N."/>
            <person name="Nakano N."/>
            <person name="Nakauchi H."/>
            <person name="Ng P."/>
            <person name="Nilsson R."/>
            <person name="Nishiguchi S."/>
            <person name="Nishikawa S."/>
            <person name="Nori F."/>
            <person name="Ohara O."/>
            <person name="Okazaki Y."/>
            <person name="Orlando V."/>
            <person name="Pang K.C."/>
            <person name="Pavan W.J."/>
            <person name="Pavesi G."/>
            <person name="Pesole G."/>
            <person name="Petrovsky N."/>
            <person name="Piazza S."/>
            <person name="Reed J."/>
            <person name="Reid J.F."/>
            <person name="Ring B.Z."/>
            <person name="Ringwald M."/>
            <person name="Rost B."/>
            <person name="Ruan Y."/>
            <person name="Salzberg S.L."/>
            <person name="Sandelin A."/>
            <person name="Schneider C."/>
            <person name="Schoenbach C."/>
            <person name="Sekiguchi K."/>
            <person name="Semple C.A."/>
            <person name="Seno S."/>
            <person name="Sessa L."/>
            <person name="Sheng Y."/>
            <person name="Shibata Y."/>
            <person name="Shimada H."/>
            <person name="Shimada K."/>
            <person name="Silva D."/>
            <person name="Sinclair B."/>
            <person name="Sperling S."/>
            <person name="Stupka E."/>
            <person name="Sugiura K."/>
            <person name="Sultana R."/>
            <person name="Takenaka Y."/>
            <person name="Taki K."/>
            <person name="Tammoja K."/>
            <person name="Tan S.L."/>
            <person name="Tang S."/>
            <person name="Taylor M.S."/>
            <person name="Tegner J."/>
            <person name="Teichmann S.A."/>
            <person name="Ueda H.R."/>
            <person name="van Nimwegen E."/>
            <person name="Verardo R."/>
            <person name="Wei C.L."/>
            <person name="Yagi K."/>
            <person name="Yamanishi H."/>
            <person name="Zabarovsky E."/>
            <person name="Zhu S."/>
            <person name="Zimmer A."/>
            <person name="Hide W."/>
            <person name="Bult C."/>
            <person name="Grimmond S.M."/>
            <person name="Teasdale R.D."/>
            <person name="Liu E.T."/>
            <person name="Brusic V."/>
            <person name="Quackenbush J."/>
            <person name="Wahlestedt C."/>
            <person name="Mattick J.S."/>
            <person name="Hume D.A."/>
            <person name="Kai C."/>
            <person name="Sasaki D."/>
            <person name="Tomaru Y."/>
            <person name="Fukuda S."/>
            <person name="Kanamori-Katayama M."/>
            <person name="Suzuki M."/>
            <person name="Aoki J."/>
            <person name="Arakawa T."/>
            <person name="Iida J."/>
            <person name="Imamura K."/>
            <person name="Itoh M."/>
            <person name="Kato T."/>
            <person name="Kawaji H."/>
            <person name="Kawagashira N."/>
            <person name="Kawashima T."/>
            <person name="Kojima M."/>
            <person name="Kondo S."/>
            <person name="Konno H."/>
            <person name="Nakano K."/>
            <person name="Ninomiya N."/>
            <person name="Nishio T."/>
            <person name="Okada M."/>
            <person name="Plessy C."/>
            <person name="Shibata K."/>
            <person name="Shiraki T."/>
            <person name="Suzuki S."/>
            <person name="Tagami M."/>
            <person name="Waki K."/>
            <person name="Watahiki A."/>
            <person name="Okamura-Oho Y."/>
            <person name="Suzuki H."/>
            <person name="Kawai J."/>
            <person name="Hayashizaki Y."/>
        </authorList>
    </citation>
    <scope>NUCLEOTIDE SEQUENCE [LARGE SCALE MRNA]</scope>
    <source>
        <strain>C57BL/6J</strain>
        <tissue>Cerebellum</tissue>
    </source>
</reference>
<reference key="3">
    <citation type="journal article" date="2004" name="Endocrinology">
        <title>Involvement of multispecific organic anion transporter, Oatp14 (Slc21a14), in the transport of thyroxine across the blood-brain barrier.</title>
        <authorList>
            <person name="Tohyama K."/>
            <person name="Kusuhara H."/>
            <person name="Sugiyama Y."/>
        </authorList>
    </citation>
    <scope>FUNCTION</scope>
    <scope>TRANSPORTER ACTIVITY</scope>
    <scope>TISSUE SPECIFICITY</scope>
    <scope>BIOPHYSICOCHEMICAL PROPERTIES</scope>
</reference>
<reference key="4">
    <citation type="journal article" date="2008" name="Endocrinology">
        <title>Expression of the thyroid hormone transporters monocarboxylate transporter-8 (SLC16A2) and organic ion transporter-14 (SLCO1C1) at the blood-brain barrier.</title>
        <authorList>
            <person name="Roberts L.M."/>
            <person name="Woodford K."/>
            <person name="Zhou M."/>
            <person name="Black D.S."/>
            <person name="Haggerty J.E."/>
            <person name="Tate E.H."/>
            <person name="Grindstaff K.K."/>
            <person name="Mengesha W."/>
            <person name="Raman C."/>
            <person name="Zerangue N."/>
        </authorList>
    </citation>
    <scope>TISSUE SPECIFICITY</scope>
    <scope>SUBCELLULAR LOCATION</scope>
</reference>
<reference key="5">
    <citation type="journal article" date="2012" name="Endocrinology">
        <title>Impact of Oatp1c1 deficiency on thyroid hormone metabolism and action in the mouse brain.</title>
        <authorList>
            <person name="Mayerl S."/>
            <person name="Visser T.J."/>
            <person name="Darras V.M."/>
            <person name="Horn S."/>
            <person name="Heuer H."/>
        </authorList>
    </citation>
    <scope>FUNCTION</scope>
    <scope>TISSUE SPECIFICITY</scope>
    <scope>TRANSPORTER ACTIVITY</scope>
    <scope>DISRUPTION PHENOTYPE</scope>
</reference>
<reference key="6">
    <citation type="journal article" date="2014" name="J. Clin. Invest.">
        <title>Transporters MCT8 and OATP1C1 maintain murine brain thyroid hormone homeostasis.</title>
        <authorList>
            <person name="Mayerl S."/>
            <person name="Mueller J."/>
            <person name="Bauer R."/>
            <person name="Richert S."/>
            <person name="Kassmann C.M."/>
            <person name="Darras V.M."/>
            <person name="Buder K."/>
            <person name="Boelen A."/>
            <person name="Visser T.J."/>
            <person name="Heuer H."/>
        </authorList>
    </citation>
    <scope>FUNCTION</scope>
    <scope>TRANSPORTER ACTIVITY</scope>
    <scope>DISRUPTION PHENOTYPE</scope>
</reference>
<dbReference type="EMBL" id="AY007379">
    <property type="protein sequence ID" value="AAG09622.1"/>
    <property type="molecule type" value="mRNA"/>
</dbReference>
<dbReference type="EMBL" id="AK048926">
    <property type="protein sequence ID" value="BAC33495.1"/>
    <property type="molecule type" value="mRNA"/>
</dbReference>
<dbReference type="CCDS" id="CCDS20677.1"/>
<dbReference type="RefSeq" id="NP_001171243.1">
    <property type="nucleotide sequence ID" value="NM_001177772.1"/>
</dbReference>
<dbReference type="RefSeq" id="NP_067446.1">
    <property type="nucleotide sequence ID" value="NM_021471.3"/>
</dbReference>
<dbReference type="SMR" id="Q9ERB5"/>
<dbReference type="BioGRID" id="208444">
    <property type="interactions" value="3"/>
</dbReference>
<dbReference type="FunCoup" id="Q9ERB5">
    <property type="interactions" value="440"/>
</dbReference>
<dbReference type="STRING" id="10090.ENSMUSP00000032362"/>
<dbReference type="BindingDB" id="Q9ERB5"/>
<dbReference type="ChEMBL" id="CHEMBL2073688"/>
<dbReference type="GlyCosmos" id="Q9ERB5">
    <property type="glycosylation" value="3 sites, No reported glycans"/>
</dbReference>
<dbReference type="GlyGen" id="Q9ERB5">
    <property type="glycosylation" value="5 sites, 3 N-linked glycans (3 sites)"/>
</dbReference>
<dbReference type="PhosphoSitePlus" id="Q9ERB5"/>
<dbReference type="SwissPalm" id="Q9ERB5"/>
<dbReference type="PaxDb" id="10090-ENSMUSP00000032362"/>
<dbReference type="ProteomicsDB" id="261102"/>
<dbReference type="Antibodypedia" id="23947">
    <property type="antibodies" value="106 antibodies from 20 providers"/>
</dbReference>
<dbReference type="DNASU" id="58807"/>
<dbReference type="Ensembl" id="ENSMUST00000032362.12">
    <property type="protein sequence ID" value="ENSMUSP00000032362.10"/>
    <property type="gene ID" value="ENSMUSG00000030235.18"/>
</dbReference>
<dbReference type="GeneID" id="58807"/>
<dbReference type="KEGG" id="mmu:58807"/>
<dbReference type="UCSC" id="uc009eop.2">
    <property type="organism name" value="mouse"/>
</dbReference>
<dbReference type="AGR" id="MGI:1889679"/>
<dbReference type="CTD" id="53919"/>
<dbReference type="MGI" id="MGI:1889679">
    <property type="gene designation" value="Slco1c1"/>
</dbReference>
<dbReference type="VEuPathDB" id="HostDB:ENSMUSG00000030235"/>
<dbReference type="eggNOG" id="KOG3626">
    <property type="taxonomic scope" value="Eukaryota"/>
</dbReference>
<dbReference type="GeneTree" id="ENSGT01130000278287"/>
<dbReference type="InParanoid" id="Q9ERB5"/>
<dbReference type="OMA" id="ISYDKHP"/>
<dbReference type="OrthoDB" id="5062115at2759"/>
<dbReference type="PhylomeDB" id="Q9ERB5"/>
<dbReference type="Reactome" id="R-MMU-879518">
    <property type="pathway name" value="Transport of organic anions"/>
</dbReference>
<dbReference type="BioGRID-ORCS" id="58807">
    <property type="hits" value="2 hits in 78 CRISPR screens"/>
</dbReference>
<dbReference type="ChiTaRS" id="Slco1c1">
    <property type="organism name" value="mouse"/>
</dbReference>
<dbReference type="PRO" id="PR:Q9ERB5"/>
<dbReference type="Proteomes" id="UP000000589">
    <property type="component" value="Chromosome 6"/>
</dbReference>
<dbReference type="RNAct" id="Q9ERB5">
    <property type="molecule type" value="protein"/>
</dbReference>
<dbReference type="Bgee" id="ENSMUSG00000030235">
    <property type="expression patterns" value="Expressed in brain blood vessel and 102 other cell types or tissues"/>
</dbReference>
<dbReference type="ExpressionAtlas" id="Q9ERB5">
    <property type="expression patterns" value="baseline and differential"/>
</dbReference>
<dbReference type="GO" id="GO:0016323">
    <property type="term" value="C:basolateral plasma membrane"/>
    <property type="evidence" value="ECO:0000314"/>
    <property type="project" value="ARUK-UCL"/>
</dbReference>
<dbReference type="GO" id="GO:0008514">
    <property type="term" value="F:organic anion transmembrane transporter activity"/>
    <property type="evidence" value="ECO:0000250"/>
    <property type="project" value="UniProtKB"/>
</dbReference>
<dbReference type="GO" id="GO:0015349">
    <property type="term" value="F:thyroid hormone transmembrane transporter activity"/>
    <property type="evidence" value="ECO:0007669"/>
    <property type="project" value="Ensembl"/>
</dbReference>
<dbReference type="GO" id="GO:0006869">
    <property type="term" value="P:lipid transport"/>
    <property type="evidence" value="ECO:0007669"/>
    <property type="project" value="UniProtKB-KW"/>
</dbReference>
<dbReference type="GO" id="GO:0006811">
    <property type="term" value="P:monoatomic ion transport"/>
    <property type="evidence" value="ECO:0007669"/>
    <property type="project" value="UniProtKB-KW"/>
</dbReference>
<dbReference type="GO" id="GO:2000611">
    <property type="term" value="P:positive regulation of thyroid hormone generation"/>
    <property type="evidence" value="ECO:0007669"/>
    <property type="project" value="Ensembl"/>
</dbReference>
<dbReference type="FunFam" id="3.30.60.30:FF:000048">
    <property type="entry name" value="Solute carrier organic anion transporter family member"/>
    <property type="match status" value="1"/>
</dbReference>
<dbReference type="Gene3D" id="1.20.1250.20">
    <property type="entry name" value="MFS general substrate transporter like domains"/>
    <property type="match status" value="1"/>
</dbReference>
<dbReference type="InterPro" id="IPR002350">
    <property type="entry name" value="Kazal_dom"/>
</dbReference>
<dbReference type="InterPro" id="IPR036058">
    <property type="entry name" value="Kazal_dom_sf"/>
</dbReference>
<dbReference type="InterPro" id="IPR020846">
    <property type="entry name" value="MFS_dom"/>
</dbReference>
<dbReference type="InterPro" id="IPR036259">
    <property type="entry name" value="MFS_trans_sf"/>
</dbReference>
<dbReference type="InterPro" id="IPR004156">
    <property type="entry name" value="OATP"/>
</dbReference>
<dbReference type="NCBIfam" id="TIGR00805">
    <property type="entry name" value="oat"/>
    <property type="match status" value="1"/>
</dbReference>
<dbReference type="PANTHER" id="PTHR11388">
    <property type="entry name" value="ORGANIC ANION TRANSPORTER"/>
    <property type="match status" value="1"/>
</dbReference>
<dbReference type="PANTHER" id="PTHR11388:SF99">
    <property type="entry name" value="SOLUTE CARRIER ORGANIC ANION TRANSPORTER FAMILY MEMBER 1C1"/>
    <property type="match status" value="1"/>
</dbReference>
<dbReference type="Pfam" id="PF07648">
    <property type="entry name" value="Kazal_2"/>
    <property type="match status" value="1"/>
</dbReference>
<dbReference type="Pfam" id="PF03137">
    <property type="entry name" value="OATP"/>
    <property type="match status" value="1"/>
</dbReference>
<dbReference type="SUPFAM" id="SSF100895">
    <property type="entry name" value="Kazal-type serine protease inhibitors"/>
    <property type="match status" value="1"/>
</dbReference>
<dbReference type="SUPFAM" id="SSF103473">
    <property type="entry name" value="MFS general substrate transporter"/>
    <property type="match status" value="1"/>
</dbReference>
<dbReference type="PROSITE" id="PS51465">
    <property type="entry name" value="KAZAL_2"/>
    <property type="match status" value="1"/>
</dbReference>
<dbReference type="PROSITE" id="PS50850">
    <property type="entry name" value="MFS"/>
    <property type="match status" value="1"/>
</dbReference>
<sequence>MDTSSKENAHLFHKNSAQPAGGPSFTVGYPSTEEARPCCGKLKVFLGALSFVYFAKALAEGYLKSTVTQIERRFEIPSSLVGIIDGSFEIGNLLVITFVSYFGAKLHRPKIIGAGCLVMGFGTMLIAVPQFFMEKYSYEKYERYSPSSNVTPSISPCYLESSSPSPSSILGKSQNKISHECVGDSSSSMWVYVFLGNLLRGLGETPIQPLGIAYLDDFASEDNAAFYIGCVQTVAIIGPIFGFLLGSLCAKLYVDIGFVNLDHITITPKDPQWVGAWWLGYLIAGFLSLLAAVPFWCLPKTLPRSQSRENSGSTSEKSKFIDDPIHYQMAPGDDKMKIMEMAKDFLPSLKTLFRNPVYILYLCASTVQFNSLFGMVTYKPKYIEQQYGQSSSKANFVIGLINIPAVALGIFSGGIVMKKFRLGICEATKLYLGSSVFGYLLFLSLFALGCENSSVAGLTVSYQGTKPVSYHERALFSDCNSRCKCSDSKWEPMCGDNGITYVSACLAGCQSSSRSGKNIIFSNCTCVGFAAPKSGNWSGMMGRCQKDNGCSQMFLYFLVISVITSYTLSLGGIPGYILLLRCIQPQLKSFALGIYTLAVRVLAGIPAPVYFGVLIDTSCLKWGFKKCGSRGSCRLYDSHAFRHIYLGLTTLLGTVSVFLSMAVLFVLKKKYVSKHSSLITTREKIGMSSSIKKETCAARDRGLQPKYWPGKETRL</sequence>
<keyword id="KW-1003">Cell membrane</keyword>
<keyword id="KW-1015">Disulfide bond</keyword>
<keyword id="KW-0325">Glycoprotein</keyword>
<keyword id="KW-0406">Ion transport</keyword>
<keyword id="KW-0445">Lipid transport</keyword>
<keyword id="KW-0472">Membrane</keyword>
<keyword id="KW-1185">Reference proteome</keyword>
<keyword id="KW-0812">Transmembrane</keyword>
<keyword id="KW-1133">Transmembrane helix</keyword>
<keyword id="KW-0813">Transport</keyword>
<evidence type="ECO:0000250" key="1">
    <source>
        <dbReference type="UniProtKB" id="Q9EPZ7"/>
    </source>
</evidence>
<evidence type="ECO:0000250" key="2">
    <source>
        <dbReference type="UniProtKB" id="Q9NYB5"/>
    </source>
</evidence>
<evidence type="ECO:0000255" key="3"/>
<evidence type="ECO:0000255" key="4">
    <source>
        <dbReference type="PROSITE-ProRule" id="PRU00798"/>
    </source>
</evidence>
<evidence type="ECO:0000269" key="5">
    <source>
    </source>
</evidence>
<evidence type="ECO:0000269" key="6">
    <source>
    </source>
</evidence>
<evidence type="ECO:0000269" key="7">
    <source>
    </source>
</evidence>
<evidence type="ECO:0000269" key="8">
    <source>
    </source>
</evidence>
<evidence type="ECO:0000303" key="9">
    <source>
    </source>
</evidence>
<evidence type="ECO:0000303" key="10">
    <source>
    </source>
</evidence>
<evidence type="ECO:0000303" key="11">
    <source>
    </source>
</evidence>
<evidence type="ECO:0000303" key="12">
    <source>
    </source>
</evidence>
<evidence type="ECO:0000305" key="13"/>
<evidence type="ECO:0000305" key="14">
    <source>
    </source>
</evidence>
<evidence type="ECO:0000305" key="15">
    <source>
    </source>
</evidence>
<organism>
    <name type="scientific">Mus musculus</name>
    <name type="common">Mouse</name>
    <dbReference type="NCBI Taxonomy" id="10090"/>
    <lineage>
        <taxon>Eukaryota</taxon>
        <taxon>Metazoa</taxon>
        <taxon>Chordata</taxon>
        <taxon>Craniata</taxon>
        <taxon>Vertebrata</taxon>
        <taxon>Euteleostomi</taxon>
        <taxon>Mammalia</taxon>
        <taxon>Eutheria</taxon>
        <taxon>Euarchontoglires</taxon>
        <taxon>Glires</taxon>
        <taxon>Rodentia</taxon>
        <taxon>Myomorpha</taxon>
        <taxon>Muroidea</taxon>
        <taxon>Muridae</taxon>
        <taxon>Murinae</taxon>
        <taxon>Mus</taxon>
        <taxon>Mus</taxon>
    </lineage>
</organism>
<protein>
    <recommendedName>
        <fullName evidence="12">Solute carrier organic anion transporter family member 1C1</fullName>
    </recommendedName>
    <alternativeName>
        <fullName>Organic anion transporter 2</fullName>
        <shortName>OATP2</shortName>
    </alternativeName>
    <alternativeName>
        <fullName>Organic anion transporter F</fullName>
        <shortName evidence="12">OATP-F</shortName>
    </alternativeName>
    <alternativeName>
        <fullName evidence="9 10">Organic anion-transporting polypeptide 14</fullName>
        <shortName evidence="9 10 12">OATP-14</shortName>
    </alternativeName>
    <alternativeName>
        <fullName>Solute carrier family 21 member 14</fullName>
    </alternativeName>
    <alternativeName>
        <fullName>Thyroxine transporter</fullName>
    </alternativeName>
</protein>
<accession>Q9ERB5</accession>
<accession>Q8BX54</accession>
<comment type="function">
    <text evidence="1 2 5 7 8 9 11">Mediates the Na(+)-independent high affinity transport of thyroid hormones at the plasma membrane of brain capillary endothelial cells (PubMed:15166123, PubMed:22294745, PubMed:24691440). The transport activity of substrates L-thyroxine (T4) and 3,3',5'-triiodo-L-thyronine (reverse T3, rT3) is much greater than that of 3,3',5-triiodo-L-thyronine (T3) (PubMed:15166123). The prehormone, T4, is the major form in the circulating blood and is converted to the active form, T3, by the iodothyronine-deiodinase in peripheral organs (PubMed:15166123). T3 plays an essential role in brain development via binding to specific nuclear receptors (thyroid hormone receptor) (PubMed:15166123, PubMed:22294745). Also transports organic anions such as the conjugated steroid 17-beta-glucuronosyl estradiol (17beta-estradiol 17-O-(beta-D-glucuronate)) (PubMed:15166123). Transports T4 and estrone-3-sulfate in a pH-insensitive manner (By similarity). May serve as a drug efflux system at the blood brain barrier (By similarity).</text>
</comment>
<comment type="catalytic activity">
    <reaction evidence="5">
        <text>3,3',5'-triiodo-L-thyronine(out) = 3,3',5'-triiodo-L-thyronine(in)</text>
        <dbReference type="Rhea" id="RHEA:71815"/>
        <dbReference type="ChEBI" id="CHEBI:57261"/>
    </reaction>
</comment>
<comment type="catalytic activity">
    <reaction evidence="5 14 15">
        <text>L-thyroxine(out) = L-thyroxine(in)</text>
        <dbReference type="Rhea" id="RHEA:71819"/>
        <dbReference type="ChEBI" id="CHEBI:58448"/>
    </reaction>
</comment>
<comment type="catalytic activity">
    <reaction evidence="2">
        <text>L-thyroxine sulfate(out) = L-thyroxine sulfate(in)</text>
        <dbReference type="Rhea" id="RHEA:73311"/>
        <dbReference type="ChEBI" id="CHEBI:176512"/>
    </reaction>
</comment>
<comment type="catalytic activity">
    <reaction evidence="5">
        <text>17beta-estradiol 17-O-(beta-D-glucuronate)(out) = 17beta-estradiol 17-O-(beta-D-glucuronate)(in)</text>
        <dbReference type="Rhea" id="RHEA:72691"/>
        <dbReference type="ChEBI" id="CHEBI:82961"/>
    </reaction>
</comment>
<comment type="catalytic activity">
    <reaction evidence="5">
        <text>3,3',5-triiodo-L-thyronine(out) = 3,3',5-triiodo-L-thyronine(in)</text>
        <dbReference type="Rhea" id="RHEA:71811"/>
        <dbReference type="ChEBI" id="CHEBI:533015"/>
    </reaction>
</comment>
<comment type="biophysicochemical properties">
    <kinetics>
        <KM evidence="5">0.34 uM for L-thyroxine</KM>
        <KM evidence="5">0.46 uM for 3,3',5'-triiodo-L-thyronine</KM>
        <KM evidence="5">23.5 uM for 17beta-estradiol 17-O-(beta-D-glucuronate)</KM>
        <Vmax evidence="5">11.7 pmol/min/mg protein with L-thyroxine</Vmax>
        <Vmax evidence="5">25.5 pmol/min/mg protein with 3,3',5'-triiodo-L-thyronine</Vmax>
        <Vmax evidence="5">95.8 pmol/min/mg protein with 17beta-estradiol 17-O-(beta-D-glucuronate)</Vmax>
    </kinetics>
</comment>
<comment type="subcellular location">
    <subcellularLocation>
        <location evidence="5 6">Cell membrane</location>
        <topology evidence="6">Multi-pass membrane protein</topology>
    </subcellularLocation>
    <text evidence="5">Expressed at the basolateral membrane of the choroid plexus epithelial cells.</text>
</comment>
<comment type="tissue specificity">
    <text evidence="5 6 7">Widely expressed throughout the brain except in the cerebellum (PubMed:15166123). Not detected in kidney, heart, lung, skeletal muscle, spleen, liver, nor testis (PubMed:15166123). Highly expressed in cerebral microvessels throughout the brain and in the choroid plexus (at mRNA and protein level) (PubMed:15166123, PubMed:18687783, PubMed:22294745).</text>
</comment>
<comment type="disruption phenotype">
    <text evidence="7 8">Knockout mice present a general hypothyroidal state of the CNS, with reduced levels of both T3 and T4, and increased activity of the iodothyronine-deiodinase D2.</text>
</comment>
<comment type="similarity">
    <text evidence="13">Belongs to the organo anion transporter (TC 2.A.60) family.</text>
</comment>